<gene>
    <name evidence="1" type="primary">atpC</name>
    <name type="ordered locus">SE_1699</name>
</gene>
<feature type="chain" id="PRO_0000188206" description="ATP synthase epsilon chain">
    <location>
        <begin position="1"/>
        <end position="134"/>
    </location>
</feature>
<feature type="region of interest" description="Disordered" evidence="2">
    <location>
        <begin position="94"/>
        <end position="115"/>
    </location>
</feature>
<feature type="compositionally biased region" description="Basic and acidic residues" evidence="2">
    <location>
        <begin position="94"/>
        <end position="104"/>
    </location>
</feature>
<evidence type="ECO:0000255" key="1">
    <source>
        <dbReference type="HAMAP-Rule" id="MF_00530"/>
    </source>
</evidence>
<evidence type="ECO:0000256" key="2">
    <source>
        <dbReference type="SAM" id="MobiDB-lite"/>
    </source>
</evidence>
<sequence length="134" mass="14909">MNTLRLNIVTPNGSVYEREDVEMAVLQTTAGEMGIMYGHIPTVAALKTGHVKVNFHNGNEFIAVSDGFIEARQHQLSIIVQTAEPASEIDVERAKLAKSRAESHLEDDDDNTDINRAKRALERANNRLRVAELQ</sequence>
<name>ATPE_STAES</name>
<comment type="function">
    <text evidence="1">Produces ATP from ADP in the presence of a proton gradient across the membrane.</text>
</comment>
<comment type="subunit">
    <text>F-type ATPases have 2 components, CF(1) - the catalytic core - and CF(0) - the membrane proton channel. CF(1) has five subunits: alpha(3), beta(3), gamma(1), delta(1), epsilon(1). CF(0) has three main subunits: a, b and c.</text>
</comment>
<comment type="subcellular location">
    <subcellularLocation>
        <location evidence="1">Cell membrane</location>
        <topology evidence="1">Peripheral membrane protein</topology>
    </subcellularLocation>
</comment>
<comment type="similarity">
    <text evidence="1">Belongs to the ATPase epsilon chain family.</text>
</comment>
<organism>
    <name type="scientific">Staphylococcus epidermidis (strain ATCC 12228 / FDA PCI 1200)</name>
    <dbReference type="NCBI Taxonomy" id="176280"/>
    <lineage>
        <taxon>Bacteria</taxon>
        <taxon>Bacillati</taxon>
        <taxon>Bacillota</taxon>
        <taxon>Bacilli</taxon>
        <taxon>Bacillales</taxon>
        <taxon>Staphylococcaceae</taxon>
        <taxon>Staphylococcus</taxon>
    </lineage>
</organism>
<reference key="1">
    <citation type="journal article" date="2003" name="Mol. Microbiol.">
        <title>Genome-based analysis of virulence genes in a non-biofilm-forming Staphylococcus epidermidis strain (ATCC 12228).</title>
        <authorList>
            <person name="Zhang Y.-Q."/>
            <person name="Ren S.-X."/>
            <person name="Li H.-L."/>
            <person name="Wang Y.-X."/>
            <person name="Fu G."/>
            <person name="Yang J."/>
            <person name="Qin Z.-Q."/>
            <person name="Miao Y.-G."/>
            <person name="Wang W.-Y."/>
            <person name="Chen R.-S."/>
            <person name="Shen Y."/>
            <person name="Chen Z."/>
            <person name="Yuan Z.-H."/>
            <person name="Zhao G.-P."/>
            <person name="Qu D."/>
            <person name="Danchin A."/>
            <person name="Wen Y.-M."/>
        </authorList>
    </citation>
    <scope>NUCLEOTIDE SEQUENCE [LARGE SCALE GENOMIC DNA]</scope>
    <source>
        <strain>ATCC 12228 / FDA PCI 1200</strain>
    </source>
</reference>
<protein>
    <recommendedName>
        <fullName evidence="1">ATP synthase epsilon chain</fullName>
    </recommendedName>
    <alternativeName>
        <fullName evidence="1">ATP synthase F1 sector epsilon subunit</fullName>
    </alternativeName>
    <alternativeName>
        <fullName evidence="1">F-ATPase epsilon subunit</fullName>
    </alternativeName>
</protein>
<proteinExistence type="inferred from homology"/>
<accession>Q8CNJ8</accession>
<keyword id="KW-0066">ATP synthesis</keyword>
<keyword id="KW-1003">Cell membrane</keyword>
<keyword id="KW-0139">CF(1)</keyword>
<keyword id="KW-0375">Hydrogen ion transport</keyword>
<keyword id="KW-0406">Ion transport</keyword>
<keyword id="KW-0472">Membrane</keyword>
<keyword id="KW-0813">Transport</keyword>
<dbReference type="EMBL" id="AE015929">
    <property type="protein sequence ID" value="AAO05298.1"/>
    <property type="molecule type" value="Genomic_DNA"/>
</dbReference>
<dbReference type="RefSeq" id="NP_765254.1">
    <property type="nucleotide sequence ID" value="NC_004461.1"/>
</dbReference>
<dbReference type="RefSeq" id="WP_002447782.1">
    <property type="nucleotide sequence ID" value="NZ_WBME01000021.1"/>
</dbReference>
<dbReference type="SMR" id="Q8CNJ8"/>
<dbReference type="KEGG" id="sep:SE_1699"/>
<dbReference type="PATRIC" id="fig|176280.10.peg.1660"/>
<dbReference type="eggNOG" id="COG0355">
    <property type="taxonomic scope" value="Bacteria"/>
</dbReference>
<dbReference type="HOGENOM" id="CLU_084338_1_3_9"/>
<dbReference type="OrthoDB" id="9804110at2"/>
<dbReference type="Proteomes" id="UP000001411">
    <property type="component" value="Chromosome"/>
</dbReference>
<dbReference type="GO" id="GO:0005886">
    <property type="term" value="C:plasma membrane"/>
    <property type="evidence" value="ECO:0007669"/>
    <property type="project" value="UniProtKB-SubCell"/>
</dbReference>
<dbReference type="GO" id="GO:0045259">
    <property type="term" value="C:proton-transporting ATP synthase complex"/>
    <property type="evidence" value="ECO:0007669"/>
    <property type="project" value="UniProtKB-KW"/>
</dbReference>
<dbReference type="GO" id="GO:0005524">
    <property type="term" value="F:ATP binding"/>
    <property type="evidence" value="ECO:0007669"/>
    <property type="project" value="UniProtKB-UniRule"/>
</dbReference>
<dbReference type="GO" id="GO:0046933">
    <property type="term" value="F:proton-transporting ATP synthase activity, rotational mechanism"/>
    <property type="evidence" value="ECO:0007669"/>
    <property type="project" value="UniProtKB-UniRule"/>
</dbReference>
<dbReference type="CDD" id="cd12152">
    <property type="entry name" value="F1-ATPase_delta"/>
    <property type="match status" value="1"/>
</dbReference>
<dbReference type="FunFam" id="1.20.5.440:FF:000001">
    <property type="entry name" value="ATP synthase epsilon chain"/>
    <property type="match status" value="1"/>
</dbReference>
<dbReference type="Gene3D" id="1.20.5.440">
    <property type="entry name" value="ATP synthase delta/epsilon subunit, C-terminal domain"/>
    <property type="match status" value="1"/>
</dbReference>
<dbReference type="Gene3D" id="2.60.15.10">
    <property type="entry name" value="F0F1 ATP synthase delta/epsilon subunit, N-terminal"/>
    <property type="match status" value="1"/>
</dbReference>
<dbReference type="HAMAP" id="MF_00530">
    <property type="entry name" value="ATP_synth_epsil_bac"/>
    <property type="match status" value="1"/>
</dbReference>
<dbReference type="InterPro" id="IPR036794">
    <property type="entry name" value="ATP_F1_dsu/esu_C_sf"/>
</dbReference>
<dbReference type="InterPro" id="IPR001469">
    <property type="entry name" value="ATP_synth_F1_dsu/esu"/>
</dbReference>
<dbReference type="InterPro" id="IPR020546">
    <property type="entry name" value="ATP_synth_F1_dsu/esu_N"/>
</dbReference>
<dbReference type="InterPro" id="IPR020547">
    <property type="entry name" value="ATP_synth_F1_esu_C"/>
</dbReference>
<dbReference type="InterPro" id="IPR036771">
    <property type="entry name" value="ATPsynth_dsu/esu_N"/>
</dbReference>
<dbReference type="NCBIfam" id="TIGR01216">
    <property type="entry name" value="ATP_synt_epsi"/>
    <property type="match status" value="1"/>
</dbReference>
<dbReference type="NCBIfam" id="NF001846">
    <property type="entry name" value="PRK00571.1-3"/>
    <property type="match status" value="1"/>
</dbReference>
<dbReference type="PANTHER" id="PTHR13822">
    <property type="entry name" value="ATP SYNTHASE DELTA/EPSILON CHAIN"/>
    <property type="match status" value="1"/>
</dbReference>
<dbReference type="PANTHER" id="PTHR13822:SF10">
    <property type="entry name" value="ATP SYNTHASE EPSILON CHAIN, CHLOROPLASTIC"/>
    <property type="match status" value="1"/>
</dbReference>
<dbReference type="Pfam" id="PF00401">
    <property type="entry name" value="ATP-synt_DE"/>
    <property type="match status" value="1"/>
</dbReference>
<dbReference type="Pfam" id="PF02823">
    <property type="entry name" value="ATP-synt_DE_N"/>
    <property type="match status" value="1"/>
</dbReference>
<dbReference type="SUPFAM" id="SSF46604">
    <property type="entry name" value="Epsilon subunit of F1F0-ATP synthase C-terminal domain"/>
    <property type="match status" value="1"/>
</dbReference>
<dbReference type="SUPFAM" id="SSF51344">
    <property type="entry name" value="Epsilon subunit of F1F0-ATP synthase N-terminal domain"/>
    <property type="match status" value="1"/>
</dbReference>